<accession>Q62867</accession>
<feature type="signal peptide" evidence="5">
    <location>
        <begin position="1"/>
        <end position="24"/>
    </location>
</feature>
<feature type="chain" id="PRO_0000026541" description="Gamma-glutamyl hydrolase">
    <location>
        <begin position="25"/>
        <end position="317"/>
    </location>
</feature>
<feature type="domain" description="Gamma-glutamyl hydrolase" evidence="3">
    <location>
        <begin position="25"/>
        <end position="317"/>
    </location>
</feature>
<feature type="active site" description="Nucleophile" evidence="3">
    <location>
        <position position="133"/>
    </location>
</feature>
<feature type="active site" description="Proton donor" evidence="3">
    <location>
        <position position="243"/>
    </location>
</feature>
<feature type="glycosylation site" description="N-linked (GlcNAc...) asparagine" evidence="2">
    <location>
        <position position="46"/>
    </location>
</feature>
<feature type="glycosylation site" description="N-linked (GlcNAc...) asparagine" evidence="8">
    <location>
        <position position="100"/>
    </location>
</feature>
<feature type="glycosylation site" description="N-linked (GlcNAc...) asparagine" evidence="2">
    <location>
        <position position="153"/>
    </location>
</feature>
<feature type="glycosylation site" description="N-linked (GlcNAc...) asparagine" evidence="2">
    <location>
        <position position="162"/>
    </location>
</feature>
<feature type="glycosylation site" description="N-linked (GlcNAc...) asparagine" evidence="2">
    <location>
        <position position="188"/>
    </location>
</feature>
<feature type="glycosylation site" description="N-linked (GlcNAc...) asparagine" evidence="2">
    <location>
        <position position="202"/>
    </location>
</feature>
<feature type="glycosylation site" description="N-linked (GlcNAc...) asparagine" evidence="2">
    <location>
        <position position="306"/>
    </location>
</feature>
<comment type="function">
    <text evidence="1 4 5">Hydrolyzes the polyglutamate sidechains of pteroylpolyglutamates (PubMed:8343522, PubMed:8621474). Progressively removes gamma-glutamyl residues from pteroylpoly-gamma-glutamate to yield pteroyl-alpha-glutamate (folic acid) and free glutamate. May play an important role in the bioavailability of dietary pteroylpolyglutamates and in the metabolism of pteroylpolyglutamates and antifolates. Exhibits either endo- or exopeptidase activity depending upon the tissue of origin. When secreted, it acts primarily as an endopeptidase (By similarity).</text>
</comment>
<comment type="catalytic activity">
    <reaction evidence="4 5">
        <text>(6S)-5,6,7,8-tetrahydrofolyl-(gamma-L-Glu)(n) + (n-1) H2O = (6S)-5,6,7,8-tetrahydrofolate + (n-1) L-glutamate</text>
        <dbReference type="Rhea" id="RHEA:56784"/>
        <dbReference type="Rhea" id="RHEA-COMP:14738"/>
        <dbReference type="ChEBI" id="CHEBI:15377"/>
        <dbReference type="ChEBI" id="CHEBI:29985"/>
        <dbReference type="ChEBI" id="CHEBI:57453"/>
        <dbReference type="ChEBI" id="CHEBI:141005"/>
        <dbReference type="EC" id="3.4.19.9"/>
    </reaction>
    <physiologicalReaction direction="left-to-right" evidence="7">
        <dbReference type="Rhea" id="RHEA:56785"/>
    </physiologicalReaction>
</comment>
<comment type="activity regulation">
    <text>Activity is altered by insulin and estrogen.</text>
</comment>
<comment type="biophysicochemical properties">
    <phDependence>
        <text evidence="4">Optimum pH is from 5 to 7.</text>
    </phDependence>
</comment>
<comment type="subunit">
    <text evidence="1">Homodimer.</text>
</comment>
<comment type="subcellular location">
    <subcellularLocation>
        <location evidence="1">Secreted</location>
        <location evidence="1">Extracellular space</location>
    </subcellularLocation>
    <subcellularLocation>
        <location evidence="1">Lysosome</location>
    </subcellularLocation>
    <subcellularLocation>
        <location evidence="1">Melanosome</location>
    </subcellularLocation>
    <text evidence="1">While its intracellular location is primarily the lysosome, most of the enzyme activity is secreted.</text>
</comment>
<comment type="similarity">
    <text evidence="6">Belongs to the peptidase C26 family.</text>
</comment>
<dbReference type="EC" id="3.4.19.9" evidence="4 5"/>
<dbReference type="EMBL" id="U38379">
    <property type="protein sequence ID" value="AAC52506.1"/>
    <property type="molecule type" value="mRNA"/>
</dbReference>
<dbReference type="EMBL" id="BC087602">
    <property type="protein sequence ID" value="AAH87602.1"/>
    <property type="molecule type" value="mRNA"/>
</dbReference>
<dbReference type="RefSeq" id="NP_037092.1">
    <property type="nucleotide sequence ID" value="NM_012960.2"/>
</dbReference>
<dbReference type="SMR" id="Q62867"/>
<dbReference type="FunCoup" id="Q62867">
    <property type="interactions" value="293"/>
</dbReference>
<dbReference type="STRING" id="10116.ENSRNOP00000009758"/>
<dbReference type="MEROPS" id="C26.001"/>
<dbReference type="GlyCosmos" id="Q62867">
    <property type="glycosylation" value="7 sites, 2 glycans"/>
</dbReference>
<dbReference type="GlyGen" id="Q62867">
    <property type="glycosylation" value="7 sites, 2 N-linked glycans (1 site)"/>
</dbReference>
<dbReference type="iPTMnet" id="Q62867"/>
<dbReference type="PhosphoSitePlus" id="Q62867"/>
<dbReference type="PaxDb" id="10116-ENSRNOP00000009758"/>
<dbReference type="Ensembl" id="ENSRNOT00000009758.6">
    <property type="protein sequence ID" value="ENSRNOP00000009758.3"/>
    <property type="gene ID" value="ENSRNOG00000007351.6"/>
</dbReference>
<dbReference type="GeneID" id="25455"/>
<dbReference type="KEGG" id="rno:25455"/>
<dbReference type="UCSC" id="RGD:2682">
    <property type="organism name" value="rat"/>
</dbReference>
<dbReference type="AGR" id="RGD:2682"/>
<dbReference type="CTD" id="8836"/>
<dbReference type="RGD" id="2682">
    <property type="gene designation" value="Ggh"/>
</dbReference>
<dbReference type="eggNOG" id="KOG1559">
    <property type="taxonomic scope" value="Eukaryota"/>
</dbReference>
<dbReference type="GeneTree" id="ENSGT00490000043388"/>
<dbReference type="HOGENOM" id="CLU_058704_1_1_1"/>
<dbReference type="InParanoid" id="Q62867"/>
<dbReference type="OMA" id="EPVSSHF"/>
<dbReference type="OrthoDB" id="64220at2759"/>
<dbReference type="PhylomeDB" id="Q62867"/>
<dbReference type="TreeFam" id="TF323437"/>
<dbReference type="BRENDA" id="3.4.19.9">
    <property type="organism ID" value="5301"/>
</dbReference>
<dbReference type="Reactome" id="R-RNO-6798695">
    <property type="pathway name" value="Neutrophil degranulation"/>
</dbReference>
<dbReference type="PRO" id="PR:Q62867"/>
<dbReference type="Proteomes" id="UP000002494">
    <property type="component" value="Chromosome 5"/>
</dbReference>
<dbReference type="Bgee" id="ENSRNOG00000007351">
    <property type="expression patterns" value="Expressed in pancreas and 20 other cell types or tissues"/>
</dbReference>
<dbReference type="GO" id="GO:0005615">
    <property type="term" value="C:extracellular space"/>
    <property type="evidence" value="ECO:0000314"/>
    <property type="project" value="RGD"/>
</dbReference>
<dbReference type="GO" id="GO:0005764">
    <property type="term" value="C:lysosome"/>
    <property type="evidence" value="ECO:0007669"/>
    <property type="project" value="UniProtKB-SubCell"/>
</dbReference>
<dbReference type="GO" id="GO:0042470">
    <property type="term" value="C:melanosome"/>
    <property type="evidence" value="ECO:0007669"/>
    <property type="project" value="UniProtKB-SubCell"/>
</dbReference>
<dbReference type="GO" id="GO:0005773">
    <property type="term" value="C:vacuole"/>
    <property type="evidence" value="ECO:0000318"/>
    <property type="project" value="GO_Central"/>
</dbReference>
<dbReference type="GO" id="GO:0034722">
    <property type="term" value="F:gamma-glutamyl-peptidase activity"/>
    <property type="evidence" value="ECO:0000314"/>
    <property type="project" value="RGD"/>
</dbReference>
<dbReference type="GO" id="GO:0045471">
    <property type="term" value="P:response to ethanol"/>
    <property type="evidence" value="ECO:0000314"/>
    <property type="project" value="RGD"/>
</dbReference>
<dbReference type="GO" id="GO:0032868">
    <property type="term" value="P:response to insulin"/>
    <property type="evidence" value="ECO:0000314"/>
    <property type="project" value="RGD"/>
</dbReference>
<dbReference type="GO" id="GO:0009410">
    <property type="term" value="P:response to xenobiotic stimulus"/>
    <property type="evidence" value="ECO:0000314"/>
    <property type="project" value="RGD"/>
</dbReference>
<dbReference type="GO" id="GO:0010043">
    <property type="term" value="P:response to zinc ion"/>
    <property type="evidence" value="ECO:0000314"/>
    <property type="project" value="RGD"/>
</dbReference>
<dbReference type="GO" id="GO:0046900">
    <property type="term" value="P:tetrahydrofolylpolyglutamate metabolic process"/>
    <property type="evidence" value="ECO:0000318"/>
    <property type="project" value="GO_Central"/>
</dbReference>
<dbReference type="FunFam" id="3.40.50.880:FF:000024">
    <property type="entry name" value="Folate gamma-glutamyl hydrolase"/>
    <property type="match status" value="1"/>
</dbReference>
<dbReference type="Gene3D" id="3.40.50.880">
    <property type="match status" value="1"/>
</dbReference>
<dbReference type="InterPro" id="IPR029062">
    <property type="entry name" value="Class_I_gatase-like"/>
</dbReference>
<dbReference type="InterPro" id="IPR015527">
    <property type="entry name" value="Pept_C26_g-glut_hydrolase"/>
</dbReference>
<dbReference type="InterPro" id="IPR011697">
    <property type="entry name" value="Peptidase_C26"/>
</dbReference>
<dbReference type="PANTHER" id="PTHR11315:SF20">
    <property type="entry name" value="GAMMA-GLUTAMYL HYDROLASE"/>
    <property type="match status" value="1"/>
</dbReference>
<dbReference type="PANTHER" id="PTHR11315">
    <property type="entry name" value="PROTEASE FAMILY C26 GAMMA-GLUTAMYL HYDROLASE"/>
    <property type="match status" value="1"/>
</dbReference>
<dbReference type="Pfam" id="PF07722">
    <property type="entry name" value="Peptidase_C26"/>
    <property type="match status" value="1"/>
</dbReference>
<dbReference type="SUPFAM" id="SSF52317">
    <property type="entry name" value="Class I glutamine amidotransferase-like"/>
    <property type="match status" value="1"/>
</dbReference>
<dbReference type="PROSITE" id="PS51275">
    <property type="entry name" value="PEPTIDASE_C26_GGH"/>
    <property type="match status" value="1"/>
</dbReference>
<proteinExistence type="evidence at protein level"/>
<organism>
    <name type="scientific">Rattus norvegicus</name>
    <name type="common">Rat</name>
    <dbReference type="NCBI Taxonomy" id="10116"/>
    <lineage>
        <taxon>Eukaryota</taxon>
        <taxon>Metazoa</taxon>
        <taxon>Chordata</taxon>
        <taxon>Craniata</taxon>
        <taxon>Vertebrata</taxon>
        <taxon>Euteleostomi</taxon>
        <taxon>Mammalia</taxon>
        <taxon>Eutheria</taxon>
        <taxon>Euarchontoglires</taxon>
        <taxon>Glires</taxon>
        <taxon>Rodentia</taxon>
        <taxon>Myomorpha</taxon>
        <taxon>Muroidea</taxon>
        <taxon>Muridae</taxon>
        <taxon>Murinae</taxon>
        <taxon>Rattus</taxon>
    </lineage>
</organism>
<sequence>MASLGRLLCAWVLLLCGLASPGLSGSYERGSKRPIIGIIMQECYGNMTKLGRFYIAASYVKFIESAGARVVPIRLDLNDAQYETLFRSINGVLLPGGGANLTHSGYSRVAKIFFTKALESFDNGDYFPVWGTCLGLEELSVLVSNDNLLTLTNTSSVKLPLNFTRDSKQSRMFRNLPEELLNSLASENLTANFHKWSLSVKNFTENEKLKKFFNILTVNTDGKTEFISSMEGYKYPIYAVQWHPEKAPFEWKKLRGISHAPNAVKTSFYLAKFFISEALKNDHHFENELEETESLIYQFCPVYTGNISSFQQAYMFN</sequence>
<reference key="1">
    <citation type="journal article" date="1996" name="J. Biol. Chem.">
        <title>Identification, cloning, and sequencing of a cDNA coding for rat gamma-glutamyl hydrolase.</title>
        <authorList>
            <person name="Yao R."/>
            <person name="Nimec Z."/>
            <person name="Ryan T.J."/>
            <person name="Galivan J."/>
        </authorList>
    </citation>
    <scope>NUCLEOTIDE SEQUENCE [MRNA]</scope>
    <scope>PROTEIN SEQUENCE OF 25-39; 173-182 AND 231-240</scope>
    <scope>CATALYTIC ACTIVITY</scope>
    <scope>FUNCTION</scope>
    <source>
        <tissue>Hepatocyte</tissue>
    </source>
</reference>
<reference key="2">
    <citation type="journal article" date="2004" name="Genome Res.">
        <title>The status, quality, and expansion of the NIH full-length cDNA project: the Mammalian Gene Collection (MGC).</title>
        <authorList>
            <consortium name="The MGC Project Team"/>
        </authorList>
    </citation>
    <scope>NUCLEOTIDE SEQUENCE [LARGE SCALE MRNA]</scope>
    <source>
        <tissue>Brain</tissue>
    </source>
</reference>
<reference key="3">
    <citation type="journal article" date="1993" name="Biochim. Biophys. Acta">
        <title>The properties of the secreted gamma-glutamyl hydrolases from H35 hepatoma cells.</title>
        <authorList>
            <person name="Wang Y."/>
            <person name="Nimec Z."/>
            <person name="Ryan T.J."/>
            <person name="Dias J.A."/>
            <person name="Galivan J."/>
        </authorList>
    </citation>
    <scope>FUNCTION</scope>
    <scope>CATALYTIC ACTIVITY</scope>
    <scope>BIOPHYSICOCHEMICAL PROPERTIES</scope>
    <source>
        <tissue>Hepatocyte</tissue>
    </source>
</reference>
<reference key="4">
    <citation type="journal article" date="2013" name="J. Proteome Res.">
        <title>Site-specific glycan-peptide analysis for determination of N-glycoproteome heterogeneity.</title>
        <authorList>
            <person name="Parker B.L."/>
            <person name="Thaysen-Andersen M."/>
            <person name="Solis N."/>
            <person name="Scott N.E."/>
            <person name="Larsen M.R."/>
            <person name="Graham M.E."/>
            <person name="Packer N.H."/>
            <person name="Cordwell S.J."/>
        </authorList>
    </citation>
    <scope>GLYCOSYLATION [LARGE SCALE ANALYSIS] AT ASN-100</scope>
    <scope>IDENTIFICATION BY MASS SPECTROMETRY [LARGE SCALE ANALYSIS]</scope>
    <source>
        <tissue>Brain</tissue>
    </source>
</reference>
<name>GGH_RAT</name>
<protein>
    <recommendedName>
        <fullName>Gamma-glutamyl hydrolase</fullName>
        <ecNumber evidence="4 5">3.4.19.9</ecNumber>
    </recommendedName>
    <alternativeName>
        <fullName>Conjugase</fullName>
    </alternativeName>
    <alternativeName>
        <fullName>GH</fullName>
    </alternativeName>
    <alternativeName>
        <fullName>Gamma-Glu-X carboxypeptidase</fullName>
    </alternativeName>
</protein>
<gene>
    <name type="primary">Ggh</name>
</gene>
<evidence type="ECO:0000250" key="1">
    <source>
        <dbReference type="UniProtKB" id="Q92820"/>
    </source>
</evidence>
<evidence type="ECO:0000255" key="2"/>
<evidence type="ECO:0000255" key="3">
    <source>
        <dbReference type="PROSITE-ProRule" id="PRU00607"/>
    </source>
</evidence>
<evidence type="ECO:0000269" key="4">
    <source>
    </source>
</evidence>
<evidence type="ECO:0000269" key="5">
    <source>
    </source>
</evidence>
<evidence type="ECO:0000305" key="6"/>
<evidence type="ECO:0000305" key="7">
    <source>
    </source>
</evidence>
<evidence type="ECO:0007744" key="8">
    <source>
    </source>
</evidence>
<keyword id="KW-0903">Direct protein sequencing</keyword>
<keyword id="KW-0325">Glycoprotein</keyword>
<keyword id="KW-0378">Hydrolase</keyword>
<keyword id="KW-0458">Lysosome</keyword>
<keyword id="KW-1185">Reference proteome</keyword>
<keyword id="KW-0964">Secreted</keyword>
<keyword id="KW-0732">Signal</keyword>